<organism>
    <name type="scientific">Oryza sativa subsp. indica</name>
    <name type="common">Rice</name>
    <dbReference type="NCBI Taxonomy" id="39946"/>
    <lineage>
        <taxon>Eukaryota</taxon>
        <taxon>Viridiplantae</taxon>
        <taxon>Streptophyta</taxon>
        <taxon>Embryophyta</taxon>
        <taxon>Tracheophyta</taxon>
        <taxon>Spermatophyta</taxon>
        <taxon>Magnoliopsida</taxon>
        <taxon>Liliopsida</taxon>
        <taxon>Poales</taxon>
        <taxon>Poaceae</taxon>
        <taxon>BOP clade</taxon>
        <taxon>Oryzoideae</taxon>
        <taxon>Oryzeae</taxon>
        <taxon>Oryzinae</taxon>
        <taxon>Oryza</taxon>
        <taxon>Oryza sativa</taxon>
    </lineage>
</organism>
<evidence type="ECO:0000250" key="1"/>
<evidence type="ECO:0000250" key="2">
    <source>
        <dbReference type="UniProtKB" id="Q9C895"/>
    </source>
</evidence>
<evidence type="ECO:0000255" key="3"/>
<evidence type="ECO:0000255" key="4">
    <source>
        <dbReference type="PROSITE-ProRule" id="PRU00175"/>
    </source>
</evidence>
<evidence type="ECO:0000256" key="5">
    <source>
        <dbReference type="SAM" id="MobiDB-lite"/>
    </source>
</evidence>
<evidence type="ECO:0000305" key="6"/>
<name>BRE1B_ORYSI</name>
<dbReference type="EC" id="2.3.2.27" evidence="2"/>
<dbReference type="EMBL" id="CM000135">
    <property type="protein sequence ID" value="EEC67460.1"/>
    <property type="molecule type" value="Genomic_DNA"/>
</dbReference>
<dbReference type="SMR" id="A2ZAC2"/>
<dbReference type="STRING" id="39946.A2ZAC2"/>
<dbReference type="EnsemblPlants" id="BGIOSGA033459-TA">
    <property type="protein sequence ID" value="BGIOSGA033459-PA"/>
    <property type="gene ID" value="BGIOSGA033459"/>
</dbReference>
<dbReference type="EnsemblPlants" id="OsKYG_10g0019950.01">
    <property type="protein sequence ID" value="OsKYG_10g0019950.01"/>
    <property type="gene ID" value="OsKYG_10g0019950"/>
</dbReference>
<dbReference type="EnsemblPlants" id="OsMH63_10G020280_01">
    <property type="protein sequence ID" value="OsMH63_10G020280_01"/>
    <property type="gene ID" value="OsMH63_10G020280"/>
</dbReference>
<dbReference type="Gramene" id="BGIOSGA033459-TA">
    <property type="protein sequence ID" value="BGIOSGA033459-PA"/>
    <property type="gene ID" value="BGIOSGA033459"/>
</dbReference>
<dbReference type="Gramene" id="OsKYG_10g0019950.01">
    <property type="protein sequence ID" value="OsKYG_10g0019950.01"/>
    <property type="gene ID" value="OsKYG_10g0019950"/>
</dbReference>
<dbReference type="Gramene" id="OsMH63_10G020280_01">
    <property type="protein sequence ID" value="OsMH63_10G020280_01"/>
    <property type="gene ID" value="OsMH63_10G020280"/>
</dbReference>
<dbReference type="HOGENOM" id="CLU_002640_1_0_1"/>
<dbReference type="OMA" id="YSNIDTR"/>
<dbReference type="UniPathway" id="UPA00143"/>
<dbReference type="Proteomes" id="UP000007015">
    <property type="component" value="Chromosome 10"/>
</dbReference>
<dbReference type="GO" id="GO:0033503">
    <property type="term" value="C:HULC complex"/>
    <property type="evidence" value="ECO:0007669"/>
    <property type="project" value="TreeGrafter"/>
</dbReference>
<dbReference type="GO" id="GO:0005634">
    <property type="term" value="C:nucleus"/>
    <property type="evidence" value="ECO:0007669"/>
    <property type="project" value="UniProtKB-SubCell"/>
</dbReference>
<dbReference type="GO" id="GO:0042803">
    <property type="term" value="F:protein homodimerization activity"/>
    <property type="evidence" value="ECO:0007669"/>
    <property type="project" value="EnsemblPlants"/>
</dbReference>
<dbReference type="GO" id="GO:0061630">
    <property type="term" value="F:ubiquitin protein ligase activity"/>
    <property type="evidence" value="ECO:0007669"/>
    <property type="project" value="TreeGrafter"/>
</dbReference>
<dbReference type="GO" id="GO:0008270">
    <property type="term" value="F:zinc ion binding"/>
    <property type="evidence" value="ECO:0007669"/>
    <property type="project" value="UniProtKB-KW"/>
</dbReference>
<dbReference type="GO" id="GO:0006325">
    <property type="term" value="P:chromatin organization"/>
    <property type="evidence" value="ECO:0007669"/>
    <property type="project" value="UniProtKB-KW"/>
</dbReference>
<dbReference type="GO" id="GO:0045087">
    <property type="term" value="P:innate immune response"/>
    <property type="evidence" value="ECO:0007669"/>
    <property type="project" value="EnsemblPlants"/>
</dbReference>
<dbReference type="GO" id="GO:0009965">
    <property type="term" value="P:leaf morphogenesis"/>
    <property type="evidence" value="ECO:0007669"/>
    <property type="project" value="EnsemblPlants"/>
</dbReference>
<dbReference type="GO" id="GO:0016567">
    <property type="term" value="P:protein ubiquitination"/>
    <property type="evidence" value="ECO:0007669"/>
    <property type="project" value="UniProtKB-UniPathway"/>
</dbReference>
<dbReference type="GO" id="GO:0010162">
    <property type="term" value="P:seed dormancy process"/>
    <property type="evidence" value="ECO:0007669"/>
    <property type="project" value="EnsemblPlants"/>
</dbReference>
<dbReference type="GO" id="GO:0010228">
    <property type="term" value="P:vegetative to reproductive phase transition of meristem"/>
    <property type="evidence" value="ECO:0007669"/>
    <property type="project" value="EnsemblPlants"/>
</dbReference>
<dbReference type="CDD" id="cd16499">
    <property type="entry name" value="RING-HC_Bre1-like"/>
    <property type="match status" value="1"/>
</dbReference>
<dbReference type="Gene3D" id="3.30.40.10">
    <property type="entry name" value="Zinc/RING finger domain, C3HC4 (zinc finger)"/>
    <property type="match status" value="1"/>
</dbReference>
<dbReference type="InterPro" id="IPR013956">
    <property type="entry name" value="E3_ubiquit_lig_Bre1"/>
</dbReference>
<dbReference type="InterPro" id="IPR018957">
    <property type="entry name" value="Znf_C3HC4_RING-type"/>
</dbReference>
<dbReference type="InterPro" id="IPR001841">
    <property type="entry name" value="Znf_RING"/>
</dbReference>
<dbReference type="InterPro" id="IPR013083">
    <property type="entry name" value="Znf_RING/FYVE/PHD"/>
</dbReference>
<dbReference type="InterPro" id="IPR017907">
    <property type="entry name" value="Znf_RING_CS"/>
</dbReference>
<dbReference type="PANTHER" id="PTHR23163:SF8">
    <property type="entry name" value="E3 UBIQUITIN-PROTEIN LIGASE BRE1-LIKE 2"/>
    <property type="match status" value="1"/>
</dbReference>
<dbReference type="PANTHER" id="PTHR23163">
    <property type="entry name" value="RING FINGER PROTEIN-RELATED"/>
    <property type="match status" value="1"/>
</dbReference>
<dbReference type="Pfam" id="PF00097">
    <property type="entry name" value="zf-C3HC4"/>
    <property type="match status" value="1"/>
</dbReference>
<dbReference type="SMART" id="SM00184">
    <property type="entry name" value="RING"/>
    <property type="match status" value="1"/>
</dbReference>
<dbReference type="SUPFAM" id="SSF57850">
    <property type="entry name" value="RING/U-box"/>
    <property type="match status" value="1"/>
</dbReference>
<dbReference type="PROSITE" id="PS00518">
    <property type="entry name" value="ZF_RING_1"/>
    <property type="match status" value="1"/>
</dbReference>
<dbReference type="PROSITE" id="PS50089">
    <property type="entry name" value="ZF_RING_2"/>
    <property type="match status" value="1"/>
</dbReference>
<sequence>MDAAALQYENQKLVQQLEAQKSKMRALEGKFKELRDEQCSYDNTLICLNKMWNQLIDDLVLLGVRAGGDLNGLQALDHEEMSEESLESCPSEEIFLFRLLNSRNFRNNDDSSLSKLVEEALALRYSTTVTLMKSLQEAFAVQQARSESLSLALNGQNSSEDVIVALENHNDYLKEVVDNLRQAVSIINRKHEKYLDEIEAFKNNQSRELHEVKCLSGELEESMAELEESRRKLAVLQLQTGGGSLMNTSAPNGVNGSVSTDKSSDKGMGWRDLKDAVEEAKTLAANRLFELHETQEDNLILSKQLEDIQDQLKDENYIVTSKPYTILSDQLHHLNAEIERYRGLVEVLQNEKDQLMQKEEEMLAKAESVDAVQQSITTYKAKIEDLEHEIQKLMAEKNDLEIKAEEALQDSGKKDFKDEIHVMAASLSKEMELLDNQMNRSKDAASEALALREEADYLRTLLAKKIDEQKEISDRYNTQVTEIKSLKALIETLDQEKQELQFIVDMLGKECSESRAISEIEESENRARKQAEYLRKCLEEHNLELRVKAANEAETACQQRLSIAEAELEDLRAKVDASERDVMKLKESIRIKEAEVDGHISEIETIGQAYEDMQTQNQHLLQQVADRDDFNIKLVSDSVKMKQAYGSLLAEKNMLQKQLQHVNSSLESSKLKITSGEEQMKTYVAQAMKSSSENRHLAISLERTMLEVSDAEKELKWLRSATGSAEKEYEINQKKIAELKMELERERNERIKLEEEYEEVKNEVSELTSETEETTIQKLQDEIKECKAILKCGVCFDRPKEVVITKCFHLFCSPCIQRNLEIRHRKCPGCGTPFGQSDVREVKI</sequence>
<protein>
    <recommendedName>
        <fullName>E3 ubiquitin-protein ligase BRE1-like 2</fullName>
        <ecNumber evidence="2">2.3.2.27</ecNumber>
    </recommendedName>
    <alternativeName>
        <fullName evidence="6">RING-type E3 ubiquitin transferase BRE1-like 2</fullName>
    </alternativeName>
</protein>
<gene>
    <name type="primary">BRE1B</name>
    <name type="ORF">OsI_34687</name>
</gene>
<comment type="function">
    <text evidence="2">E3 ubiquitin-protein ligase that monoubiquitinates H2B to form H2BK143ub1. H2BK143ub1 gives a specific tag for epigenetic transcriptional activation and is also prerequisite for H3K4me and maybe H3K79me. It thereby plays a central role in histone code and gene regulation. Forms a ubiquitin ligase complex in cooperation with the E2 enzyme UBC2/RAD6.</text>
</comment>
<comment type="catalytic activity">
    <reaction evidence="2">
        <text>S-ubiquitinyl-[E2 ubiquitin-conjugating enzyme]-L-cysteine + [acceptor protein]-L-lysine = [E2 ubiquitin-conjugating enzyme]-L-cysteine + N(6)-ubiquitinyl-[acceptor protein]-L-lysine.</text>
        <dbReference type="EC" id="2.3.2.27"/>
    </reaction>
</comment>
<comment type="pathway">
    <text>Protein modification; protein ubiquitination.</text>
</comment>
<comment type="subcellular location">
    <subcellularLocation>
        <location evidence="2">Nucleus</location>
    </subcellularLocation>
</comment>
<comment type="domain">
    <text evidence="1">The RING-type zinc finger domain mediates binding to an E2 ubiquitin-conjugating enzyme.</text>
</comment>
<comment type="similarity">
    <text evidence="6">Belongs to the BRE1 family.</text>
</comment>
<reference key="1">
    <citation type="journal article" date="2005" name="PLoS Biol.">
        <title>The genomes of Oryza sativa: a history of duplications.</title>
        <authorList>
            <person name="Yu J."/>
            <person name="Wang J."/>
            <person name="Lin W."/>
            <person name="Li S."/>
            <person name="Li H."/>
            <person name="Zhou J."/>
            <person name="Ni P."/>
            <person name="Dong W."/>
            <person name="Hu S."/>
            <person name="Zeng C."/>
            <person name="Zhang J."/>
            <person name="Zhang Y."/>
            <person name="Li R."/>
            <person name="Xu Z."/>
            <person name="Li S."/>
            <person name="Li X."/>
            <person name="Zheng H."/>
            <person name="Cong L."/>
            <person name="Lin L."/>
            <person name="Yin J."/>
            <person name="Geng J."/>
            <person name="Li G."/>
            <person name="Shi J."/>
            <person name="Liu J."/>
            <person name="Lv H."/>
            <person name="Li J."/>
            <person name="Wang J."/>
            <person name="Deng Y."/>
            <person name="Ran L."/>
            <person name="Shi X."/>
            <person name="Wang X."/>
            <person name="Wu Q."/>
            <person name="Li C."/>
            <person name="Ren X."/>
            <person name="Wang J."/>
            <person name="Wang X."/>
            <person name="Li D."/>
            <person name="Liu D."/>
            <person name="Zhang X."/>
            <person name="Ji Z."/>
            <person name="Zhao W."/>
            <person name="Sun Y."/>
            <person name="Zhang Z."/>
            <person name="Bao J."/>
            <person name="Han Y."/>
            <person name="Dong L."/>
            <person name="Ji J."/>
            <person name="Chen P."/>
            <person name="Wu S."/>
            <person name="Liu J."/>
            <person name="Xiao Y."/>
            <person name="Bu D."/>
            <person name="Tan J."/>
            <person name="Yang L."/>
            <person name="Ye C."/>
            <person name="Zhang J."/>
            <person name="Xu J."/>
            <person name="Zhou Y."/>
            <person name="Yu Y."/>
            <person name="Zhang B."/>
            <person name="Zhuang S."/>
            <person name="Wei H."/>
            <person name="Liu B."/>
            <person name="Lei M."/>
            <person name="Yu H."/>
            <person name="Li Y."/>
            <person name="Xu H."/>
            <person name="Wei S."/>
            <person name="He X."/>
            <person name="Fang L."/>
            <person name="Zhang Z."/>
            <person name="Zhang Y."/>
            <person name="Huang X."/>
            <person name="Su Z."/>
            <person name="Tong W."/>
            <person name="Li J."/>
            <person name="Tong Z."/>
            <person name="Li S."/>
            <person name="Ye J."/>
            <person name="Wang L."/>
            <person name="Fang L."/>
            <person name="Lei T."/>
            <person name="Chen C.-S."/>
            <person name="Chen H.-C."/>
            <person name="Xu Z."/>
            <person name="Li H."/>
            <person name="Huang H."/>
            <person name="Zhang F."/>
            <person name="Xu H."/>
            <person name="Li N."/>
            <person name="Zhao C."/>
            <person name="Li S."/>
            <person name="Dong L."/>
            <person name="Huang Y."/>
            <person name="Li L."/>
            <person name="Xi Y."/>
            <person name="Qi Q."/>
            <person name="Li W."/>
            <person name="Zhang B."/>
            <person name="Hu W."/>
            <person name="Zhang Y."/>
            <person name="Tian X."/>
            <person name="Jiao Y."/>
            <person name="Liang X."/>
            <person name="Jin J."/>
            <person name="Gao L."/>
            <person name="Zheng W."/>
            <person name="Hao B."/>
            <person name="Liu S.-M."/>
            <person name="Wang W."/>
            <person name="Yuan L."/>
            <person name="Cao M."/>
            <person name="McDermott J."/>
            <person name="Samudrala R."/>
            <person name="Wang J."/>
            <person name="Wong G.K.-S."/>
            <person name="Yang H."/>
        </authorList>
    </citation>
    <scope>NUCLEOTIDE SEQUENCE [LARGE SCALE GENOMIC DNA]</scope>
    <source>
        <strain>cv. 93-11</strain>
    </source>
</reference>
<keyword id="KW-0156">Chromatin regulator</keyword>
<keyword id="KW-0175">Coiled coil</keyword>
<keyword id="KW-0479">Metal-binding</keyword>
<keyword id="KW-0539">Nucleus</keyword>
<keyword id="KW-1185">Reference proteome</keyword>
<keyword id="KW-0808">Transferase</keyword>
<keyword id="KW-0833">Ubl conjugation pathway</keyword>
<keyword id="KW-0862">Zinc</keyword>
<keyword id="KW-0863">Zinc-finger</keyword>
<accession>A2ZAC2</accession>
<accession>B8BIA7</accession>
<feature type="chain" id="PRO_0000293113" description="E3 ubiquitin-protein ligase BRE1-like 2">
    <location>
        <begin position="1"/>
        <end position="844"/>
    </location>
</feature>
<feature type="zinc finger region" description="RING-type" evidence="4">
    <location>
        <begin position="792"/>
        <end position="831"/>
    </location>
</feature>
<feature type="region of interest" description="Disordered" evidence="5">
    <location>
        <begin position="244"/>
        <end position="269"/>
    </location>
</feature>
<feature type="coiled-coil region" evidence="3">
    <location>
        <begin position="1"/>
        <end position="38"/>
    </location>
</feature>
<feature type="coiled-coil region" evidence="3">
    <location>
        <begin position="160"/>
        <end position="240"/>
    </location>
</feature>
<feature type="coiled-coil region" evidence="3">
    <location>
        <begin position="290"/>
        <end position="604"/>
    </location>
</feature>
<feature type="coiled-coil region" evidence="3">
    <location>
        <begin position="640"/>
        <end position="670"/>
    </location>
</feature>
<feature type="compositionally biased region" description="Polar residues" evidence="5">
    <location>
        <begin position="245"/>
        <end position="261"/>
    </location>
</feature>
<proteinExistence type="inferred from homology"/>